<keyword id="KW-0687">Ribonucleoprotein</keyword>
<keyword id="KW-0689">Ribosomal protein</keyword>
<gene>
    <name evidence="1" type="primary">rplQ</name>
    <name type="ordered locus">BAMEG_0154</name>
</gene>
<accession>C3LJX2</accession>
<evidence type="ECO:0000255" key="1">
    <source>
        <dbReference type="HAMAP-Rule" id="MF_01368"/>
    </source>
</evidence>
<evidence type="ECO:0000305" key="2"/>
<dbReference type="EMBL" id="CP001215">
    <property type="protein sequence ID" value="ACP14898.1"/>
    <property type="molecule type" value="Genomic_DNA"/>
</dbReference>
<dbReference type="RefSeq" id="WP_000331490.1">
    <property type="nucleotide sequence ID" value="NC_012581.1"/>
</dbReference>
<dbReference type="SMR" id="C3LJX2"/>
<dbReference type="GeneID" id="93010915"/>
<dbReference type="KEGG" id="bah:BAMEG_0154"/>
<dbReference type="HOGENOM" id="CLU_074407_2_2_9"/>
<dbReference type="GO" id="GO:0022625">
    <property type="term" value="C:cytosolic large ribosomal subunit"/>
    <property type="evidence" value="ECO:0007669"/>
    <property type="project" value="TreeGrafter"/>
</dbReference>
<dbReference type="GO" id="GO:0003735">
    <property type="term" value="F:structural constituent of ribosome"/>
    <property type="evidence" value="ECO:0007669"/>
    <property type="project" value="InterPro"/>
</dbReference>
<dbReference type="GO" id="GO:0006412">
    <property type="term" value="P:translation"/>
    <property type="evidence" value="ECO:0007669"/>
    <property type="project" value="UniProtKB-UniRule"/>
</dbReference>
<dbReference type="FunFam" id="3.90.1030.10:FF:000002">
    <property type="entry name" value="50S ribosomal protein L17"/>
    <property type="match status" value="1"/>
</dbReference>
<dbReference type="Gene3D" id="3.90.1030.10">
    <property type="entry name" value="Ribosomal protein L17"/>
    <property type="match status" value="1"/>
</dbReference>
<dbReference type="HAMAP" id="MF_01368">
    <property type="entry name" value="Ribosomal_bL17"/>
    <property type="match status" value="1"/>
</dbReference>
<dbReference type="InterPro" id="IPR000456">
    <property type="entry name" value="Ribosomal_bL17"/>
</dbReference>
<dbReference type="InterPro" id="IPR047859">
    <property type="entry name" value="Ribosomal_bL17_CS"/>
</dbReference>
<dbReference type="InterPro" id="IPR036373">
    <property type="entry name" value="Ribosomal_bL17_sf"/>
</dbReference>
<dbReference type="NCBIfam" id="TIGR00059">
    <property type="entry name" value="L17"/>
    <property type="match status" value="1"/>
</dbReference>
<dbReference type="PANTHER" id="PTHR14413:SF16">
    <property type="entry name" value="LARGE RIBOSOMAL SUBUNIT PROTEIN BL17M"/>
    <property type="match status" value="1"/>
</dbReference>
<dbReference type="PANTHER" id="PTHR14413">
    <property type="entry name" value="RIBOSOMAL PROTEIN L17"/>
    <property type="match status" value="1"/>
</dbReference>
<dbReference type="Pfam" id="PF01196">
    <property type="entry name" value="Ribosomal_L17"/>
    <property type="match status" value="1"/>
</dbReference>
<dbReference type="SUPFAM" id="SSF64263">
    <property type="entry name" value="Prokaryotic ribosomal protein L17"/>
    <property type="match status" value="1"/>
</dbReference>
<dbReference type="PROSITE" id="PS01167">
    <property type="entry name" value="RIBOSOMAL_L17"/>
    <property type="match status" value="1"/>
</dbReference>
<organism>
    <name type="scientific">Bacillus anthracis (strain CDC 684 / NRRL 3495)</name>
    <dbReference type="NCBI Taxonomy" id="568206"/>
    <lineage>
        <taxon>Bacteria</taxon>
        <taxon>Bacillati</taxon>
        <taxon>Bacillota</taxon>
        <taxon>Bacilli</taxon>
        <taxon>Bacillales</taxon>
        <taxon>Bacillaceae</taxon>
        <taxon>Bacillus</taxon>
        <taxon>Bacillus cereus group</taxon>
    </lineage>
</organism>
<sequence>MAYRKLGRTSAQRKAMLRDLATDLIINERIQTTETRAKELRSVVEKMITLGKRGDLHARRQAAAFIRNEVANAETGQDALQKLFADVAPRYAERQGGYTRIAKIGPRRGDAAPMVIIELV</sequence>
<comment type="subunit">
    <text evidence="1">Part of the 50S ribosomal subunit. Contacts protein L32.</text>
</comment>
<comment type="similarity">
    <text evidence="1">Belongs to the bacterial ribosomal protein bL17 family.</text>
</comment>
<reference key="1">
    <citation type="submission" date="2008-10" db="EMBL/GenBank/DDBJ databases">
        <title>Genome sequence of Bacillus anthracis str. CDC 684.</title>
        <authorList>
            <person name="Dodson R.J."/>
            <person name="Munk A.C."/>
            <person name="Brettin T."/>
            <person name="Bruce D."/>
            <person name="Detter C."/>
            <person name="Tapia R."/>
            <person name="Han C."/>
            <person name="Sutton G."/>
            <person name="Sims D."/>
        </authorList>
    </citation>
    <scope>NUCLEOTIDE SEQUENCE [LARGE SCALE GENOMIC DNA]</scope>
    <source>
        <strain>CDC 684 / NRRL 3495</strain>
    </source>
</reference>
<proteinExistence type="inferred from homology"/>
<name>RL17_BACAC</name>
<protein>
    <recommendedName>
        <fullName evidence="1">Large ribosomal subunit protein bL17</fullName>
    </recommendedName>
    <alternativeName>
        <fullName evidence="2">50S ribosomal protein L17</fullName>
    </alternativeName>
</protein>
<feature type="chain" id="PRO_1000183997" description="Large ribosomal subunit protein bL17">
    <location>
        <begin position="1"/>
        <end position="120"/>
    </location>
</feature>